<reference key="1">
    <citation type="submission" date="2006-03" db="EMBL/GenBank/DDBJ databases">
        <title>Complete sequence of Rhodopseudomonas palustris BisB5.</title>
        <authorList>
            <consortium name="US DOE Joint Genome Institute"/>
            <person name="Copeland A."/>
            <person name="Lucas S."/>
            <person name="Lapidus A."/>
            <person name="Barry K."/>
            <person name="Detter J.C."/>
            <person name="Glavina del Rio T."/>
            <person name="Hammon N."/>
            <person name="Israni S."/>
            <person name="Dalin E."/>
            <person name="Tice H."/>
            <person name="Pitluck S."/>
            <person name="Chain P."/>
            <person name="Malfatti S."/>
            <person name="Shin M."/>
            <person name="Vergez L."/>
            <person name="Schmutz J."/>
            <person name="Larimer F."/>
            <person name="Land M."/>
            <person name="Hauser L."/>
            <person name="Pelletier D.A."/>
            <person name="Kyrpides N."/>
            <person name="Lykidis A."/>
            <person name="Oda Y."/>
            <person name="Harwood C.S."/>
            <person name="Richardson P."/>
        </authorList>
    </citation>
    <scope>NUCLEOTIDE SEQUENCE [LARGE SCALE GENOMIC DNA]</scope>
    <source>
        <strain>BisB5</strain>
    </source>
</reference>
<protein>
    <recommendedName>
        <fullName evidence="1">Isocitrate dehydrogenase kinase/phosphatase</fullName>
        <shortName evidence="1">IDH kinase/phosphatase</shortName>
        <shortName evidence="1">IDHK/P</shortName>
        <ecNumber evidence="1">2.7.11.5</ecNumber>
        <ecNumber evidence="1">3.1.3.-</ecNumber>
    </recommendedName>
</protein>
<sequence length="606" mass="67370">MTADAHLFSASDLEAATRIAEPDFELLDALIRTDDPDDQAHTLARVALSAFDNYYAVSRRIPALAKAAFYARDWPATVRLSKIRIGLYTACIDQLVPLLKAGLPELANDEQVWVRAEAELLAAIAGRYEADFAFAFWQSLRRKLVSDEWRPVSYDTGPAARPPAAIAAVVRTIAATLPIQPEVIRNVLDAAGFTGPWRDLDGDAALAAAAIEAALEPLSPRAGETAKIEIAESGFFRNRGACLVGRIRLRDRGDMPPRNIPLLVALLNEDDGLVVDAVLCDSDELQFAFSSTLANYHATNPRYHELARLLHELMPKRPLGTQYSCIGFHHLGKVAVMNEILTEHRRSKEKLATAPGFKGTVAIAFTMPCSAYVLKIIRDHPTDDYKFDYFDGLDAVLRKYNLVHEIDRAGSMLDNIIYSNVKLARTMFAPDLLDELLEAGIGTVTLERDALVFRHLIVQIKLTPLPLYLTTAAAADARAAVINLGDCIKNNAAADIFNKDLDGRNYGVSRIRKVYLFDYDAVEQLTEVKVRSTPPMPRAEDEDGVVFRPAQMLEGLRIDDPGLRRAFRDAHPELMQPDYWEGMQHALRAGKVPKVMNYPTSRRLRR</sequence>
<dbReference type="EC" id="2.7.11.5" evidence="1"/>
<dbReference type="EC" id="3.1.3.-" evidence="1"/>
<dbReference type="EMBL" id="CP000283">
    <property type="protein sequence ID" value="ABE37615.1"/>
    <property type="molecule type" value="Genomic_DNA"/>
</dbReference>
<dbReference type="SMR" id="Q13E74"/>
<dbReference type="STRING" id="316057.RPD_0377"/>
<dbReference type="KEGG" id="rpd:RPD_0377"/>
<dbReference type="eggNOG" id="COG4579">
    <property type="taxonomic scope" value="Bacteria"/>
</dbReference>
<dbReference type="HOGENOM" id="CLU_033804_1_1_5"/>
<dbReference type="BioCyc" id="RPAL316057:RPD_RS01945-MONOMER"/>
<dbReference type="Proteomes" id="UP000001818">
    <property type="component" value="Chromosome"/>
</dbReference>
<dbReference type="GO" id="GO:0005737">
    <property type="term" value="C:cytoplasm"/>
    <property type="evidence" value="ECO:0007669"/>
    <property type="project" value="UniProtKB-SubCell"/>
</dbReference>
<dbReference type="GO" id="GO:0008772">
    <property type="term" value="F:[isocitrate dehydrogenase (NADP+)] kinase activity"/>
    <property type="evidence" value="ECO:0007669"/>
    <property type="project" value="UniProtKB-UniRule"/>
</dbReference>
<dbReference type="GO" id="GO:0016208">
    <property type="term" value="F:AMP binding"/>
    <property type="evidence" value="ECO:0007669"/>
    <property type="project" value="TreeGrafter"/>
</dbReference>
<dbReference type="GO" id="GO:0005524">
    <property type="term" value="F:ATP binding"/>
    <property type="evidence" value="ECO:0007669"/>
    <property type="project" value="UniProtKB-UniRule"/>
</dbReference>
<dbReference type="GO" id="GO:0004721">
    <property type="term" value="F:phosphoprotein phosphatase activity"/>
    <property type="evidence" value="ECO:0007669"/>
    <property type="project" value="UniProtKB-KW"/>
</dbReference>
<dbReference type="GO" id="GO:0004674">
    <property type="term" value="F:protein serine/threonine kinase activity"/>
    <property type="evidence" value="ECO:0007669"/>
    <property type="project" value="UniProtKB-KW"/>
</dbReference>
<dbReference type="GO" id="GO:0006006">
    <property type="term" value="P:glucose metabolic process"/>
    <property type="evidence" value="ECO:0007669"/>
    <property type="project" value="InterPro"/>
</dbReference>
<dbReference type="GO" id="GO:0006097">
    <property type="term" value="P:glyoxylate cycle"/>
    <property type="evidence" value="ECO:0007669"/>
    <property type="project" value="UniProtKB-UniRule"/>
</dbReference>
<dbReference type="GO" id="GO:0006099">
    <property type="term" value="P:tricarboxylic acid cycle"/>
    <property type="evidence" value="ECO:0007669"/>
    <property type="project" value="UniProtKB-UniRule"/>
</dbReference>
<dbReference type="HAMAP" id="MF_00747">
    <property type="entry name" value="AceK"/>
    <property type="match status" value="1"/>
</dbReference>
<dbReference type="InterPro" id="IPR046855">
    <property type="entry name" value="AceK_kinase"/>
</dbReference>
<dbReference type="InterPro" id="IPR046854">
    <property type="entry name" value="AceK_regulatory"/>
</dbReference>
<dbReference type="InterPro" id="IPR010452">
    <property type="entry name" value="Isocitrate_DH_AceK"/>
</dbReference>
<dbReference type="NCBIfam" id="NF002804">
    <property type="entry name" value="PRK02946.1"/>
    <property type="match status" value="1"/>
</dbReference>
<dbReference type="PANTHER" id="PTHR39559">
    <property type="match status" value="1"/>
</dbReference>
<dbReference type="PANTHER" id="PTHR39559:SF1">
    <property type="entry name" value="ISOCITRATE DEHYDROGENASE KINASE_PHOSPHATASE"/>
    <property type="match status" value="1"/>
</dbReference>
<dbReference type="Pfam" id="PF06315">
    <property type="entry name" value="AceK_kinase"/>
    <property type="match status" value="1"/>
</dbReference>
<dbReference type="Pfam" id="PF20423">
    <property type="entry name" value="AceK_regulatory"/>
    <property type="match status" value="1"/>
</dbReference>
<dbReference type="PIRSF" id="PIRSF000719">
    <property type="entry name" value="AceK"/>
    <property type="match status" value="1"/>
</dbReference>
<organism>
    <name type="scientific">Rhodopseudomonas palustris (strain BisB5)</name>
    <dbReference type="NCBI Taxonomy" id="316057"/>
    <lineage>
        <taxon>Bacteria</taxon>
        <taxon>Pseudomonadati</taxon>
        <taxon>Pseudomonadota</taxon>
        <taxon>Alphaproteobacteria</taxon>
        <taxon>Hyphomicrobiales</taxon>
        <taxon>Nitrobacteraceae</taxon>
        <taxon>Rhodopseudomonas</taxon>
    </lineage>
</organism>
<evidence type="ECO:0000255" key="1">
    <source>
        <dbReference type="HAMAP-Rule" id="MF_00747"/>
    </source>
</evidence>
<accession>Q13E74</accession>
<name>ACEK_RHOPS</name>
<proteinExistence type="inferred from homology"/>
<keyword id="KW-0067">ATP-binding</keyword>
<keyword id="KW-0963">Cytoplasm</keyword>
<keyword id="KW-0329">Glyoxylate bypass</keyword>
<keyword id="KW-0378">Hydrolase</keyword>
<keyword id="KW-0418">Kinase</keyword>
<keyword id="KW-0547">Nucleotide-binding</keyword>
<keyword id="KW-0904">Protein phosphatase</keyword>
<keyword id="KW-0723">Serine/threonine-protein kinase</keyword>
<keyword id="KW-0808">Transferase</keyword>
<keyword id="KW-0816">Tricarboxylic acid cycle</keyword>
<comment type="function">
    <text evidence="1">Bifunctional enzyme which can phosphorylate or dephosphorylate isocitrate dehydrogenase (IDH) on a specific serine residue. This is a regulatory mechanism which enables bacteria to bypass the Krebs cycle via the glyoxylate shunt in response to the source of carbon. When bacteria are grown on glucose, IDH is fully active and unphosphorylated, but when grown on acetate or ethanol, the activity of IDH declines drastically concomitant with its phosphorylation.</text>
</comment>
<comment type="catalytic activity">
    <reaction evidence="1">
        <text>L-seryl-[isocitrate dehydrogenase] + ATP = O-phospho-L-seryl-[isocitrate dehydrogenase] + ADP + H(+)</text>
        <dbReference type="Rhea" id="RHEA:43540"/>
        <dbReference type="Rhea" id="RHEA-COMP:10605"/>
        <dbReference type="Rhea" id="RHEA-COMP:10606"/>
        <dbReference type="ChEBI" id="CHEBI:15378"/>
        <dbReference type="ChEBI" id="CHEBI:29999"/>
        <dbReference type="ChEBI" id="CHEBI:30616"/>
        <dbReference type="ChEBI" id="CHEBI:83421"/>
        <dbReference type="ChEBI" id="CHEBI:456216"/>
        <dbReference type="EC" id="2.7.11.5"/>
    </reaction>
</comment>
<comment type="subcellular location">
    <subcellularLocation>
        <location evidence="1">Cytoplasm</location>
    </subcellularLocation>
</comment>
<comment type="similarity">
    <text evidence="1">Belongs to the AceK family.</text>
</comment>
<feature type="chain" id="PRO_0000288299" description="Isocitrate dehydrogenase kinase/phosphatase">
    <location>
        <begin position="1"/>
        <end position="606"/>
    </location>
</feature>
<feature type="active site" evidence="1">
    <location>
        <position position="414"/>
    </location>
</feature>
<feature type="binding site" evidence="1">
    <location>
        <begin position="354"/>
        <end position="360"/>
    </location>
    <ligand>
        <name>ATP</name>
        <dbReference type="ChEBI" id="CHEBI:30616"/>
    </ligand>
</feature>
<feature type="binding site" evidence="1">
    <location>
        <position position="375"/>
    </location>
    <ligand>
        <name>ATP</name>
        <dbReference type="ChEBI" id="CHEBI:30616"/>
    </ligand>
</feature>
<gene>
    <name evidence="1" type="primary">aceK</name>
    <name type="ordered locus">RPD_0377</name>
</gene>